<organism>
    <name type="scientific">Francisella tularensis subsp. novicida (strain U112)</name>
    <dbReference type="NCBI Taxonomy" id="401614"/>
    <lineage>
        <taxon>Bacteria</taxon>
        <taxon>Pseudomonadati</taxon>
        <taxon>Pseudomonadota</taxon>
        <taxon>Gammaproteobacteria</taxon>
        <taxon>Thiotrichales</taxon>
        <taxon>Francisellaceae</taxon>
        <taxon>Francisella</taxon>
    </lineage>
</organism>
<evidence type="ECO:0000255" key="1">
    <source>
        <dbReference type="HAMAP-Rule" id="MF_00086"/>
    </source>
</evidence>
<comment type="function">
    <text evidence="1">Catalyzes the formation of S-adenosylmethionine (AdoMet) from methionine and ATP. The overall synthetic reaction is composed of two sequential steps, AdoMet formation and the subsequent tripolyphosphate hydrolysis which occurs prior to release of AdoMet from the enzyme.</text>
</comment>
<comment type="catalytic activity">
    <reaction evidence="1">
        <text>L-methionine + ATP + H2O = S-adenosyl-L-methionine + phosphate + diphosphate</text>
        <dbReference type="Rhea" id="RHEA:21080"/>
        <dbReference type="ChEBI" id="CHEBI:15377"/>
        <dbReference type="ChEBI" id="CHEBI:30616"/>
        <dbReference type="ChEBI" id="CHEBI:33019"/>
        <dbReference type="ChEBI" id="CHEBI:43474"/>
        <dbReference type="ChEBI" id="CHEBI:57844"/>
        <dbReference type="ChEBI" id="CHEBI:59789"/>
        <dbReference type="EC" id="2.5.1.6"/>
    </reaction>
</comment>
<comment type="cofactor">
    <cofactor evidence="1">
        <name>Mg(2+)</name>
        <dbReference type="ChEBI" id="CHEBI:18420"/>
    </cofactor>
    <text evidence="1">Binds 2 divalent ions per subunit.</text>
</comment>
<comment type="cofactor">
    <cofactor evidence="1">
        <name>K(+)</name>
        <dbReference type="ChEBI" id="CHEBI:29103"/>
    </cofactor>
    <text evidence="1">Binds 1 potassium ion per subunit.</text>
</comment>
<comment type="pathway">
    <text evidence="1">Amino-acid biosynthesis; S-adenosyl-L-methionine biosynthesis; S-adenosyl-L-methionine from L-methionine: step 1/1.</text>
</comment>
<comment type="subunit">
    <text evidence="1">Homotetramer; dimer of dimers.</text>
</comment>
<comment type="subcellular location">
    <subcellularLocation>
        <location evidence="1">Cytoplasm</location>
    </subcellularLocation>
</comment>
<comment type="similarity">
    <text evidence="1">Belongs to the AdoMet synthase family.</text>
</comment>
<protein>
    <recommendedName>
        <fullName evidence="1">S-adenosylmethionine synthase</fullName>
        <shortName evidence="1">AdoMet synthase</shortName>
        <ecNumber evidence="1">2.5.1.6</ecNumber>
    </recommendedName>
    <alternativeName>
        <fullName evidence="1">MAT</fullName>
    </alternativeName>
    <alternativeName>
        <fullName evidence="1">Methionine adenosyltransferase</fullName>
    </alternativeName>
</protein>
<keyword id="KW-0067">ATP-binding</keyword>
<keyword id="KW-0963">Cytoplasm</keyword>
<keyword id="KW-0460">Magnesium</keyword>
<keyword id="KW-0479">Metal-binding</keyword>
<keyword id="KW-0547">Nucleotide-binding</keyword>
<keyword id="KW-0554">One-carbon metabolism</keyword>
<keyword id="KW-0630">Potassium</keyword>
<keyword id="KW-0808">Transferase</keyword>
<name>METK_FRATN</name>
<sequence>MSKNYLFTSESVSEGHPDKLADQISDAILDEILKQDKNARVACETLVKTGMALVAGEITTSAWVDIEELVRNVITETGYDNASKGIDGRTCSVINAIGKQSRDIAQGVDRGSLEDLGAGDQGLMFGFATNETPTLMPSAIYYSHLLMRKQAELRKSGKLAWLRPDAKAQVTLAYENDKPKFIDTIVLSTQHNESISQKELHDAVIEEIVKKVIPNELITKDTKYHINPTGVFLIGGPQGDCGLTGRKIIVDTYGGAAHHGGGAFSGKDPSKVDRSGAYMGRYIAKNIVAAGLADKCEVQVAYAIGVAKPVSLMVNTFGTGKITDNQIEKLVAEVFDLRVGKIIENLDLLRPIYRKTSNYGHFGRELPEFTWEKIDKADILKSAARI</sequence>
<accession>A0Q862</accession>
<gene>
    <name evidence="1" type="primary">metK</name>
    <name type="ordered locus">FTN_1563</name>
</gene>
<dbReference type="EC" id="2.5.1.6" evidence="1"/>
<dbReference type="EMBL" id="CP000439">
    <property type="protein sequence ID" value="ABK90427.1"/>
    <property type="molecule type" value="Genomic_DNA"/>
</dbReference>
<dbReference type="RefSeq" id="WP_003017219.1">
    <property type="nucleotide sequence ID" value="NZ_CP009633.1"/>
</dbReference>
<dbReference type="SMR" id="A0Q862"/>
<dbReference type="GeneID" id="75264705"/>
<dbReference type="KEGG" id="ftn:FTN_1563"/>
<dbReference type="KEGG" id="ftx:AW25_435"/>
<dbReference type="BioCyc" id="FTUL401614:G1G75-1615-MONOMER"/>
<dbReference type="UniPathway" id="UPA00315">
    <property type="reaction ID" value="UER00080"/>
</dbReference>
<dbReference type="Proteomes" id="UP000000762">
    <property type="component" value="Chromosome"/>
</dbReference>
<dbReference type="GO" id="GO:0005737">
    <property type="term" value="C:cytoplasm"/>
    <property type="evidence" value="ECO:0007669"/>
    <property type="project" value="UniProtKB-SubCell"/>
</dbReference>
<dbReference type="GO" id="GO:0005524">
    <property type="term" value="F:ATP binding"/>
    <property type="evidence" value="ECO:0007669"/>
    <property type="project" value="UniProtKB-UniRule"/>
</dbReference>
<dbReference type="GO" id="GO:0000287">
    <property type="term" value="F:magnesium ion binding"/>
    <property type="evidence" value="ECO:0007669"/>
    <property type="project" value="UniProtKB-UniRule"/>
</dbReference>
<dbReference type="GO" id="GO:0004478">
    <property type="term" value="F:methionine adenosyltransferase activity"/>
    <property type="evidence" value="ECO:0007669"/>
    <property type="project" value="UniProtKB-UniRule"/>
</dbReference>
<dbReference type="GO" id="GO:0006730">
    <property type="term" value="P:one-carbon metabolic process"/>
    <property type="evidence" value="ECO:0007669"/>
    <property type="project" value="UniProtKB-KW"/>
</dbReference>
<dbReference type="GO" id="GO:0006556">
    <property type="term" value="P:S-adenosylmethionine biosynthetic process"/>
    <property type="evidence" value="ECO:0007669"/>
    <property type="project" value="UniProtKB-UniRule"/>
</dbReference>
<dbReference type="CDD" id="cd18079">
    <property type="entry name" value="S-AdoMet_synt"/>
    <property type="match status" value="1"/>
</dbReference>
<dbReference type="FunFam" id="3.30.300.10:FF:000003">
    <property type="entry name" value="S-adenosylmethionine synthase"/>
    <property type="match status" value="1"/>
</dbReference>
<dbReference type="Gene3D" id="3.30.300.10">
    <property type="match status" value="3"/>
</dbReference>
<dbReference type="HAMAP" id="MF_00086">
    <property type="entry name" value="S_AdoMet_synth1"/>
    <property type="match status" value="1"/>
</dbReference>
<dbReference type="InterPro" id="IPR022631">
    <property type="entry name" value="ADOMET_SYNTHASE_CS"/>
</dbReference>
<dbReference type="InterPro" id="IPR022630">
    <property type="entry name" value="S-AdoMet_synt_C"/>
</dbReference>
<dbReference type="InterPro" id="IPR022629">
    <property type="entry name" value="S-AdoMet_synt_central"/>
</dbReference>
<dbReference type="InterPro" id="IPR022628">
    <property type="entry name" value="S-AdoMet_synt_N"/>
</dbReference>
<dbReference type="InterPro" id="IPR002133">
    <property type="entry name" value="S-AdoMet_synthetase"/>
</dbReference>
<dbReference type="InterPro" id="IPR022636">
    <property type="entry name" value="S-AdoMet_synthetase_sfam"/>
</dbReference>
<dbReference type="NCBIfam" id="TIGR01034">
    <property type="entry name" value="metK"/>
    <property type="match status" value="1"/>
</dbReference>
<dbReference type="PANTHER" id="PTHR11964">
    <property type="entry name" value="S-ADENOSYLMETHIONINE SYNTHETASE"/>
    <property type="match status" value="1"/>
</dbReference>
<dbReference type="Pfam" id="PF02773">
    <property type="entry name" value="S-AdoMet_synt_C"/>
    <property type="match status" value="1"/>
</dbReference>
<dbReference type="Pfam" id="PF02772">
    <property type="entry name" value="S-AdoMet_synt_M"/>
    <property type="match status" value="1"/>
</dbReference>
<dbReference type="Pfam" id="PF00438">
    <property type="entry name" value="S-AdoMet_synt_N"/>
    <property type="match status" value="1"/>
</dbReference>
<dbReference type="PIRSF" id="PIRSF000497">
    <property type="entry name" value="MAT"/>
    <property type="match status" value="1"/>
</dbReference>
<dbReference type="SUPFAM" id="SSF55973">
    <property type="entry name" value="S-adenosylmethionine synthetase"/>
    <property type="match status" value="3"/>
</dbReference>
<dbReference type="PROSITE" id="PS00376">
    <property type="entry name" value="ADOMET_SYNTHASE_1"/>
    <property type="match status" value="1"/>
</dbReference>
<dbReference type="PROSITE" id="PS00377">
    <property type="entry name" value="ADOMET_SYNTHASE_2"/>
    <property type="match status" value="1"/>
</dbReference>
<reference key="1">
    <citation type="journal article" date="2007" name="Genome Biol.">
        <title>Comparison of Francisella tularensis genomes reveals evolutionary events associated with the emergence of human pathogenic strains.</title>
        <authorList>
            <person name="Rohmer L."/>
            <person name="Fong C."/>
            <person name="Abmayr S."/>
            <person name="Wasnick M."/>
            <person name="Larson Freeman T.J."/>
            <person name="Radey M."/>
            <person name="Guina T."/>
            <person name="Svensson K."/>
            <person name="Hayden H.S."/>
            <person name="Jacobs M."/>
            <person name="Gallagher L.A."/>
            <person name="Manoil C."/>
            <person name="Ernst R.K."/>
            <person name="Drees B."/>
            <person name="Buckley D."/>
            <person name="Haugen E."/>
            <person name="Bovee D."/>
            <person name="Zhou Y."/>
            <person name="Chang J."/>
            <person name="Levy R."/>
            <person name="Lim R."/>
            <person name="Gillett W."/>
            <person name="Guenthener D."/>
            <person name="Kang A."/>
            <person name="Shaffer S.A."/>
            <person name="Taylor G."/>
            <person name="Chen J."/>
            <person name="Gallis B."/>
            <person name="D'Argenio D.A."/>
            <person name="Forsman M."/>
            <person name="Olson M.V."/>
            <person name="Goodlett D.R."/>
            <person name="Kaul R."/>
            <person name="Miller S.I."/>
            <person name="Brittnacher M.J."/>
        </authorList>
    </citation>
    <scope>NUCLEOTIDE SEQUENCE [LARGE SCALE GENOMIC DNA]</scope>
    <source>
        <strain>U112</strain>
    </source>
</reference>
<proteinExistence type="inferred from homology"/>
<feature type="chain" id="PRO_0000302915" description="S-adenosylmethionine synthase">
    <location>
        <begin position="1"/>
        <end position="386"/>
    </location>
</feature>
<feature type="region of interest" description="Flexible loop" evidence="1">
    <location>
        <begin position="100"/>
        <end position="110"/>
    </location>
</feature>
<feature type="binding site" description="in other chain" evidence="1">
    <location>
        <position position="16"/>
    </location>
    <ligand>
        <name>ATP</name>
        <dbReference type="ChEBI" id="CHEBI:30616"/>
        <note>ligand shared between two neighboring subunits</note>
    </ligand>
</feature>
<feature type="binding site" evidence="1">
    <location>
        <position position="18"/>
    </location>
    <ligand>
        <name>Mg(2+)</name>
        <dbReference type="ChEBI" id="CHEBI:18420"/>
    </ligand>
</feature>
<feature type="binding site" evidence="1">
    <location>
        <position position="44"/>
    </location>
    <ligand>
        <name>K(+)</name>
        <dbReference type="ChEBI" id="CHEBI:29103"/>
    </ligand>
</feature>
<feature type="binding site" description="in other chain" evidence="1">
    <location>
        <position position="57"/>
    </location>
    <ligand>
        <name>L-methionine</name>
        <dbReference type="ChEBI" id="CHEBI:57844"/>
        <note>ligand shared between two neighboring subunits</note>
    </ligand>
</feature>
<feature type="binding site" description="in other chain" evidence="1">
    <location>
        <position position="100"/>
    </location>
    <ligand>
        <name>L-methionine</name>
        <dbReference type="ChEBI" id="CHEBI:57844"/>
        <note>ligand shared between two neighboring subunits</note>
    </ligand>
</feature>
<feature type="binding site" description="in other chain" evidence="1">
    <location>
        <begin position="165"/>
        <end position="167"/>
    </location>
    <ligand>
        <name>ATP</name>
        <dbReference type="ChEBI" id="CHEBI:30616"/>
        <note>ligand shared between two neighboring subunits</note>
    </ligand>
</feature>
<feature type="binding site" evidence="1">
    <location>
        <position position="240"/>
    </location>
    <ligand>
        <name>ATP</name>
        <dbReference type="ChEBI" id="CHEBI:30616"/>
        <note>ligand shared between two neighboring subunits</note>
    </ligand>
</feature>
<feature type="binding site" evidence="1">
    <location>
        <position position="240"/>
    </location>
    <ligand>
        <name>L-methionine</name>
        <dbReference type="ChEBI" id="CHEBI:57844"/>
        <note>ligand shared between two neighboring subunits</note>
    </ligand>
</feature>
<feature type="binding site" description="in other chain" evidence="1">
    <location>
        <begin position="246"/>
        <end position="247"/>
    </location>
    <ligand>
        <name>ATP</name>
        <dbReference type="ChEBI" id="CHEBI:30616"/>
        <note>ligand shared between two neighboring subunits</note>
    </ligand>
</feature>
<feature type="binding site" evidence="1">
    <location>
        <position position="263"/>
    </location>
    <ligand>
        <name>ATP</name>
        <dbReference type="ChEBI" id="CHEBI:30616"/>
        <note>ligand shared between two neighboring subunits</note>
    </ligand>
</feature>
<feature type="binding site" evidence="1">
    <location>
        <position position="267"/>
    </location>
    <ligand>
        <name>ATP</name>
        <dbReference type="ChEBI" id="CHEBI:30616"/>
        <note>ligand shared between two neighboring subunits</note>
    </ligand>
</feature>
<feature type="binding site" description="in other chain" evidence="1">
    <location>
        <position position="271"/>
    </location>
    <ligand>
        <name>L-methionine</name>
        <dbReference type="ChEBI" id="CHEBI:57844"/>
        <note>ligand shared between two neighboring subunits</note>
    </ligand>
</feature>